<geneLocation type="mitochondrion"/>
<organism>
    <name type="scientific">Chrotomys sibuyanensis</name>
    <name type="common">Sibuyan striped shrew rat</name>
    <dbReference type="NCBI Taxonomy" id="290249"/>
    <lineage>
        <taxon>Eukaryota</taxon>
        <taxon>Metazoa</taxon>
        <taxon>Chordata</taxon>
        <taxon>Craniata</taxon>
        <taxon>Vertebrata</taxon>
        <taxon>Euteleostomi</taxon>
        <taxon>Mammalia</taxon>
        <taxon>Eutheria</taxon>
        <taxon>Euarchontoglires</taxon>
        <taxon>Glires</taxon>
        <taxon>Rodentia</taxon>
        <taxon>Myomorpha</taxon>
        <taxon>Muroidea</taxon>
        <taxon>Muridae</taxon>
        <taxon>Murinae</taxon>
        <taxon>Chrotomys</taxon>
    </lineage>
</organism>
<gene>
    <name type="primary">MT-CYB</name>
    <name type="synonym">COB</name>
    <name type="synonym">CYTB</name>
    <name type="synonym">MTCYB</name>
</gene>
<proteinExistence type="inferred from homology"/>
<reference key="1">
    <citation type="journal article" date="2005" name="J. Mammal.">
        <title>Review of the philippine genera Chrotomys and Celaenomys (Murinae) and description of a new species.</title>
        <authorList>
            <person name="Rickart E.A."/>
            <person name="Heaney L.R."/>
            <person name="Goodman S.M."/>
            <person name="Jansa S."/>
        </authorList>
    </citation>
    <scope>NUCLEOTIDE SEQUENCE [GENOMIC DNA]</scope>
</reference>
<accession>Q64GI8</accession>
<comment type="function">
    <text evidence="2">Component of the ubiquinol-cytochrome c reductase complex (complex III or cytochrome b-c1 complex) that is part of the mitochondrial respiratory chain. The b-c1 complex mediates electron transfer from ubiquinol to cytochrome c. Contributes to the generation of a proton gradient across the mitochondrial membrane that is then used for ATP synthesis.</text>
</comment>
<comment type="cofactor">
    <cofactor evidence="2">
        <name>heme b</name>
        <dbReference type="ChEBI" id="CHEBI:60344"/>
    </cofactor>
    <text evidence="2">Binds 2 heme b groups non-covalently.</text>
</comment>
<comment type="subunit">
    <text evidence="2">The cytochrome bc1 complex contains 11 subunits: 3 respiratory subunits (MT-CYB, CYC1 and UQCRFS1), 2 core proteins (UQCRC1 and UQCRC2) and 6 low-molecular weight proteins (UQCRH/QCR6, UQCRB/QCR7, UQCRQ/QCR8, UQCR10/QCR9, UQCR11/QCR10 and a cleavage product of UQCRFS1). This cytochrome bc1 complex then forms a dimer.</text>
</comment>
<comment type="subcellular location">
    <subcellularLocation>
        <location evidence="2">Mitochondrion inner membrane</location>
        <topology evidence="2">Multi-pass membrane protein</topology>
    </subcellularLocation>
</comment>
<comment type="miscellaneous">
    <text evidence="1">Heme 1 (or BL or b562) is low-potential and absorbs at about 562 nm, and heme 2 (or BH or b566) is high-potential and absorbs at about 566 nm.</text>
</comment>
<comment type="similarity">
    <text evidence="3 4">Belongs to the cytochrome b family.</text>
</comment>
<comment type="caution">
    <text evidence="2">The full-length protein contains only eight transmembrane helices, not nine as predicted by bioinformatics tools.</text>
</comment>
<name>CYB_CHRSB</name>
<feature type="chain" id="PRO_0000255007" description="Cytochrome b">
    <location>
        <begin position="1"/>
        <end position="381"/>
    </location>
</feature>
<feature type="transmembrane region" description="Helical" evidence="2">
    <location>
        <begin position="33"/>
        <end position="53"/>
    </location>
</feature>
<feature type="transmembrane region" description="Helical" evidence="2">
    <location>
        <begin position="77"/>
        <end position="98"/>
    </location>
</feature>
<feature type="transmembrane region" description="Helical" evidence="2">
    <location>
        <begin position="113"/>
        <end position="133"/>
    </location>
</feature>
<feature type="transmembrane region" description="Helical" evidence="2">
    <location>
        <begin position="178"/>
        <end position="198"/>
    </location>
</feature>
<feature type="transmembrane region" description="Helical" evidence="2">
    <location>
        <begin position="226"/>
        <end position="246"/>
    </location>
</feature>
<feature type="transmembrane region" description="Helical" evidence="2">
    <location>
        <begin position="288"/>
        <end position="308"/>
    </location>
</feature>
<feature type="transmembrane region" description="Helical" evidence="2">
    <location>
        <begin position="320"/>
        <end position="340"/>
    </location>
</feature>
<feature type="transmembrane region" description="Helical" evidence="2">
    <location>
        <begin position="347"/>
        <end position="367"/>
    </location>
</feature>
<feature type="binding site" description="axial binding residue" evidence="2">
    <location>
        <position position="83"/>
    </location>
    <ligand>
        <name>heme b</name>
        <dbReference type="ChEBI" id="CHEBI:60344"/>
        <label>b562</label>
    </ligand>
    <ligandPart>
        <name>Fe</name>
        <dbReference type="ChEBI" id="CHEBI:18248"/>
    </ligandPart>
</feature>
<feature type="binding site" description="axial binding residue" evidence="2">
    <location>
        <position position="97"/>
    </location>
    <ligand>
        <name>heme b</name>
        <dbReference type="ChEBI" id="CHEBI:60344"/>
        <label>b566</label>
    </ligand>
    <ligandPart>
        <name>Fe</name>
        <dbReference type="ChEBI" id="CHEBI:18248"/>
    </ligandPart>
</feature>
<feature type="binding site" description="axial binding residue" evidence="2">
    <location>
        <position position="182"/>
    </location>
    <ligand>
        <name>heme b</name>
        <dbReference type="ChEBI" id="CHEBI:60344"/>
        <label>b562</label>
    </ligand>
    <ligandPart>
        <name>Fe</name>
        <dbReference type="ChEBI" id="CHEBI:18248"/>
    </ligandPart>
</feature>
<feature type="binding site" description="axial binding residue" evidence="2">
    <location>
        <position position="196"/>
    </location>
    <ligand>
        <name>heme b</name>
        <dbReference type="ChEBI" id="CHEBI:60344"/>
        <label>b566</label>
    </ligand>
    <ligandPart>
        <name>Fe</name>
        <dbReference type="ChEBI" id="CHEBI:18248"/>
    </ligandPart>
</feature>
<feature type="binding site" evidence="2">
    <location>
        <position position="201"/>
    </location>
    <ligand>
        <name>a ubiquinone</name>
        <dbReference type="ChEBI" id="CHEBI:16389"/>
    </ligand>
</feature>
<sequence>MTNIRKTHPLIKIINHSFIDLPAPSNISSWWNFGSLLGLCLMIQIMTGLFLAMHYTADTMTAFSSVTHICRDVNYGWLIRYMHANGASMFFICLFIHVGRGMYYGSYTFMETWNIGVLLLFTVMATAFMGYVLPWGQMSFWGATVITNLLSAIPYIGTTLVEWIWGGFSVDKATLTRFFAFHFILPFIITALVIVHLLFLHETGSNNPTGLNSDADKIPFHPYYTIKDLLGVLMLILFLMMLVLFFPDLLGDPDNYMPANPLNTPPHIKPEWYFLFAYAILRSIPNKLGGVLALIMSILILALLPFLHTSKQRSMMFRPITQALYWILVANLLVLTWIGGQPVEHPFIIIGQLASISYFSIILILMPISGIIEDKLLKWSL</sequence>
<dbReference type="EMBL" id="AY687862">
    <property type="protein sequence ID" value="AAU21045.1"/>
    <property type="molecule type" value="Genomic_DNA"/>
</dbReference>
<dbReference type="SMR" id="Q64GI8"/>
<dbReference type="GO" id="GO:0005743">
    <property type="term" value="C:mitochondrial inner membrane"/>
    <property type="evidence" value="ECO:0007669"/>
    <property type="project" value="UniProtKB-SubCell"/>
</dbReference>
<dbReference type="GO" id="GO:0045275">
    <property type="term" value="C:respiratory chain complex III"/>
    <property type="evidence" value="ECO:0007669"/>
    <property type="project" value="InterPro"/>
</dbReference>
<dbReference type="GO" id="GO:0046872">
    <property type="term" value="F:metal ion binding"/>
    <property type="evidence" value="ECO:0007669"/>
    <property type="project" value="UniProtKB-KW"/>
</dbReference>
<dbReference type="GO" id="GO:0008121">
    <property type="term" value="F:ubiquinol-cytochrome-c reductase activity"/>
    <property type="evidence" value="ECO:0007669"/>
    <property type="project" value="InterPro"/>
</dbReference>
<dbReference type="GO" id="GO:0006122">
    <property type="term" value="P:mitochondrial electron transport, ubiquinol to cytochrome c"/>
    <property type="evidence" value="ECO:0007669"/>
    <property type="project" value="TreeGrafter"/>
</dbReference>
<dbReference type="CDD" id="cd00290">
    <property type="entry name" value="cytochrome_b_C"/>
    <property type="match status" value="1"/>
</dbReference>
<dbReference type="CDD" id="cd00284">
    <property type="entry name" value="Cytochrome_b_N"/>
    <property type="match status" value="1"/>
</dbReference>
<dbReference type="FunFam" id="1.20.810.10:FF:000002">
    <property type="entry name" value="Cytochrome b"/>
    <property type="match status" value="1"/>
</dbReference>
<dbReference type="Gene3D" id="1.20.810.10">
    <property type="entry name" value="Cytochrome Bc1 Complex, Chain C"/>
    <property type="match status" value="1"/>
</dbReference>
<dbReference type="InterPro" id="IPR005798">
    <property type="entry name" value="Cyt_b/b6_C"/>
</dbReference>
<dbReference type="InterPro" id="IPR036150">
    <property type="entry name" value="Cyt_b/b6_C_sf"/>
</dbReference>
<dbReference type="InterPro" id="IPR005797">
    <property type="entry name" value="Cyt_b/b6_N"/>
</dbReference>
<dbReference type="InterPro" id="IPR027387">
    <property type="entry name" value="Cytb/b6-like_sf"/>
</dbReference>
<dbReference type="InterPro" id="IPR030689">
    <property type="entry name" value="Cytochrome_b"/>
</dbReference>
<dbReference type="InterPro" id="IPR048260">
    <property type="entry name" value="Cytochrome_b_C_euk/bac"/>
</dbReference>
<dbReference type="InterPro" id="IPR048259">
    <property type="entry name" value="Cytochrome_b_N_euk/bac"/>
</dbReference>
<dbReference type="InterPro" id="IPR016174">
    <property type="entry name" value="Di-haem_cyt_TM"/>
</dbReference>
<dbReference type="PANTHER" id="PTHR19271">
    <property type="entry name" value="CYTOCHROME B"/>
    <property type="match status" value="1"/>
</dbReference>
<dbReference type="PANTHER" id="PTHR19271:SF16">
    <property type="entry name" value="CYTOCHROME B"/>
    <property type="match status" value="1"/>
</dbReference>
<dbReference type="Pfam" id="PF00032">
    <property type="entry name" value="Cytochrom_B_C"/>
    <property type="match status" value="1"/>
</dbReference>
<dbReference type="Pfam" id="PF00033">
    <property type="entry name" value="Cytochrome_B"/>
    <property type="match status" value="1"/>
</dbReference>
<dbReference type="PIRSF" id="PIRSF038885">
    <property type="entry name" value="COB"/>
    <property type="match status" value="1"/>
</dbReference>
<dbReference type="SUPFAM" id="SSF81648">
    <property type="entry name" value="a domain/subunit of cytochrome bc1 complex (Ubiquinol-cytochrome c reductase)"/>
    <property type="match status" value="1"/>
</dbReference>
<dbReference type="SUPFAM" id="SSF81342">
    <property type="entry name" value="Transmembrane di-heme cytochromes"/>
    <property type="match status" value="1"/>
</dbReference>
<dbReference type="PROSITE" id="PS51003">
    <property type="entry name" value="CYTB_CTER"/>
    <property type="match status" value="1"/>
</dbReference>
<dbReference type="PROSITE" id="PS51002">
    <property type="entry name" value="CYTB_NTER"/>
    <property type="match status" value="1"/>
</dbReference>
<protein>
    <recommendedName>
        <fullName>Cytochrome b</fullName>
    </recommendedName>
    <alternativeName>
        <fullName>Complex III subunit 3</fullName>
    </alternativeName>
    <alternativeName>
        <fullName>Complex III subunit III</fullName>
    </alternativeName>
    <alternativeName>
        <fullName>Cytochrome b-c1 complex subunit 3</fullName>
    </alternativeName>
    <alternativeName>
        <fullName>Ubiquinol-cytochrome-c reductase complex cytochrome b subunit</fullName>
    </alternativeName>
</protein>
<evidence type="ECO:0000250" key="1"/>
<evidence type="ECO:0000250" key="2">
    <source>
        <dbReference type="UniProtKB" id="P00157"/>
    </source>
</evidence>
<evidence type="ECO:0000255" key="3">
    <source>
        <dbReference type="PROSITE-ProRule" id="PRU00967"/>
    </source>
</evidence>
<evidence type="ECO:0000255" key="4">
    <source>
        <dbReference type="PROSITE-ProRule" id="PRU00968"/>
    </source>
</evidence>
<keyword id="KW-0249">Electron transport</keyword>
<keyword id="KW-0349">Heme</keyword>
<keyword id="KW-0408">Iron</keyword>
<keyword id="KW-0472">Membrane</keyword>
<keyword id="KW-0479">Metal-binding</keyword>
<keyword id="KW-0496">Mitochondrion</keyword>
<keyword id="KW-0999">Mitochondrion inner membrane</keyword>
<keyword id="KW-0679">Respiratory chain</keyword>
<keyword id="KW-0812">Transmembrane</keyword>
<keyword id="KW-1133">Transmembrane helix</keyword>
<keyword id="KW-0813">Transport</keyword>
<keyword id="KW-0830">Ubiquinone</keyword>